<gene>
    <name evidence="1" type="primary">trpA</name>
    <name type="ordered locus">Avin_02130</name>
</gene>
<name>TRPA_AZOVD</name>
<evidence type="ECO:0000255" key="1">
    <source>
        <dbReference type="HAMAP-Rule" id="MF_00131"/>
    </source>
</evidence>
<accession>C1DH67</accession>
<dbReference type="EC" id="4.2.1.20" evidence="1"/>
<dbReference type="EMBL" id="CP001157">
    <property type="protein sequence ID" value="ACO76474.1"/>
    <property type="molecule type" value="Genomic_DNA"/>
</dbReference>
<dbReference type="RefSeq" id="WP_012698902.1">
    <property type="nucleotide sequence ID" value="NC_012560.1"/>
</dbReference>
<dbReference type="SMR" id="C1DH67"/>
<dbReference type="STRING" id="322710.Avin_02130"/>
<dbReference type="EnsemblBacteria" id="ACO76474">
    <property type="protein sequence ID" value="ACO76474"/>
    <property type="gene ID" value="Avin_02130"/>
</dbReference>
<dbReference type="GeneID" id="88183679"/>
<dbReference type="KEGG" id="avn:Avin_02130"/>
<dbReference type="eggNOG" id="COG0159">
    <property type="taxonomic scope" value="Bacteria"/>
</dbReference>
<dbReference type="HOGENOM" id="CLU_016734_0_4_6"/>
<dbReference type="OrthoDB" id="9804578at2"/>
<dbReference type="UniPathway" id="UPA00035">
    <property type="reaction ID" value="UER00044"/>
</dbReference>
<dbReference type="Proteomes" id="UP000002424">
    <property type="component" value="Chromosome"/>
</dbReference>
<dbReference type="GO" id="GO:0005829">
    <property type="term" value="C:cytosol"/>
    <property type="evidence" value="ECO:0007669"/>
    <property type="project" value="TreeGrafter"/>
</dbReference>
<dbReference type="GO" id="GO:0004834">
    <property type="term" value="F:tryptophan synthase activity"/>
    <property type="evidence" value="ECO:0007669"/>
    <property type="project" value="UniProtKB-UniRule"/>
</dbReference>
<dbReference type="CDD" id="cd04724">
    <property type="entry name" value="Tryptophan_synthase_alpha"/>
    <property type="match status" value="1"/>
</dbReference>
<dbReference type="FunFam" id="3.20.20.70:FF:000037">
    <property type="entry name" value="Tryptophan synthase alpha chain"/>
    <property type="match status" value="1"/>
</dbReference>
<dbReference type="Gene3D" id="3.20.20.70">
    <property type="entry name" value="Aldolase class I"/>
    <property type="match status" value="1"/>
</dbReference>
<dbReference type="HAMAP" id="MF_00131">
    <property type="entry name" value="Trp_synth_alpha"/>
    <property type="match status" value="1"/>
</dbReference>
<dbReference type="InterPro" id="IPR013785">
    <property type="entry name" value="Aldolase_TIM"/>
</dbReference>
<dbReference type="InterPro" id="IPR011060">
    <property type="entry name" value="RibuloseP-bd_barrel"/>
</dbReference>
<dbReference type="InterPro" id="IPR018204">
    <property type="entry name" value="Trp_synthase_alpha_AS"/>
</dbReference>
<dbReference type="InterPro" id="IPR002028">
    <property type="entry name" value="Trp_synthase_suA"/>
</dbReference>
<dbReference type="NCBIfam" id="TIGR00262">
    <property type="entry name" value="trpA"/>
    <property type="match status" value="1"/>
</dbReference>
<dbReference type="PANTHER" id="PTHR43406:SF1">
    <property type="entry name" value="TRYPTOPHAN SYNTHASE ALPHA CHAIN, CHLOROPLASTIC"/>
    <property type="match status" value="1"/>
</dbReference>
<dbReference type="PANTHER" id="PTHR43406">
    <property type="entry name" value="TRYPTOPHAN SYNTHASE, ALPHA CHAIN"/>
    <property type="match status" value="1"/>
</dbReference>
<dbReference type="Pfam" id="PF00290">
    <property type="entry name" value="Trp_syntA"/>
    <property type="match status" value="1"/>
</dbReference>
<dbReference type="SUPFAM" id="SSF51366">
    <property type="entry name" value="Ribulose-phoshate binding barrel"/>
    <property type="match status" value="1"/>
</dbReference>
<dbReference type="PROSITE" id="PS00167">
    <property type="entry name" value="TRP_SYNTHASE_ALPHA"/>
    <property type="match status" value="1"/>
</dbReference>
<reference key="1">
    <citation type="journal article" date="2009" name="J. Bacteriol.">
        <title>Genome sequence of Azotobacter vinelandii, an obligate aerobe specialized to support diverse anaerobic metabolic processes.</title>
        <authorList>
            <person name="Setubal J.C."/>
            <person name="Dos Santos P."/>
            <person name="Goldman B.S."/>
            <person name="Ertesvaag H."/>
            <person name="Espin G."/>
            <person name="Rubio L.M."/>
            <person name="Valla S."/>
            <person name="Almeida N.F."/>
            <person name="Balasubramanian D."/>
            <person name="Cromes L."/>
            <person name="Curatti L."/>
            <person name="Du Z."/>
            <person name="Godsy E."/>
            <person name="Goodner B."/>
            <person name="Hellner-Burris K."/>
            <person name="Hernandez J.A."/>
            <person name="Houmiel K."/>
            <person name="Imperial J."/>
            <person name="Kennedy C."/>
            <person name="Larson T.J."/>
            <person name="Latreille P."/>
            <person name="Ligon L.S."/>
            <person name="Lu J."/>
            <person name="Maerk M."/>
            <person name="Miller N.M."/>
            <person name="Norton S."/>
            <person name="O'Carroll I.P."/>
            <person name="Paulsen I."/>
            <person name="Raulfs E.C."/>
            <person name="Roemer R."/>
            <person name="Rosser J."/>
            <person name="Segura D."/>
            <person name="Slater S."/>
            <person name="Stricklin S.L."/>
            <person name="Studholme D.J."/>
            <person name="Sun J."/>
            <person name="Viana C.J."/>
            <person name="Wallin E."/>
            <person name="Wang B."/>
            <person name="Wheeler C."/>
            <person name="Zhu H."/>
            <person name="Dean D.R."/>
            <person name="Dixon R."/>
            <person name="Wood D."/>
        </authorList>
    </citation>
    <scope>NUCLEOTIDE SEQUENCE [LARGE SCALE GENOMIC DNA]</scope>
    <source>
        <strain>DJ / ATCC BAA-1303</strain>
    </source>
</reference>
<feature type="chain" id="PRO_1000203175" description="Tryptophan synthase alpha chain">
    <location>
        <begin position="1"/>
        <end position="269"/>
    </location>
</feature>
<feature type="active site" description="Proton acceptor" evidence="1">
    <location>
        <position position="49"/>
    </location>
</feature>
<feature type="active site" description="Proton acceptor" evidence="1">
    <location>
        <position position="60"/>
    </location>
</feature>
<keyword id="KW-0028">Amino-acid biosynthesis</keyword>
<keyword id="KW-0057">Aromatic amino acid biosynthesis</keyword>
<keyword id="KW-0456">Lyase</keyword>
<keyword id="KW-0822">Tryptophan biosynthesis</keyword>
<organism>
    <name type="scientific">Azotobacter vinelandii (strain DJ / ATCC BAA-1303)</name>
    <dbReference type="NCBI Taxonomy" id="322710"/>
    <lineage>
        <taxon>Bacteria</taxon>
        <taxon>Pseudomonadati</taxon>
        <taxon>Pseudomonadota</taxon>
        <taxon>Gammaproteobacteria</taxon>
        <taxon>Pseudomonadales</taxon>
        <taxon>Pseudomonadaceae</taxon>
        <taxon>Azotobacter</taxon>
    </lineage>
</organism>
<comment type="function">
    <text evidence="1">The alpha subunit is responsible for the aldol cleavage of indoleglycerol phosphate to indole and glyceraldehyde 3-phosphate.</text>
</comment>
<comment type="catalytic activity">
    <reaction evidence="1">
        <text>(1S,2R)-1-C-(indol-3-yl)glycerol 3-phosphate + L-serine = D-glyceraldehyde 3-phosphate + L-tryptophan + H2O</text>
        <dbReference type="Rhea" id="RHEA:10532"/>
        <dbReference type="ChEBI" id="CHEBI:15377"/>
        <dbReference type="ChEBI" id="CHEBI:33384"/>
        <dbReference type="ChEBI" id="CHEBI:57912"/>
        <dbReference type="ChEBI" id="CHEBI:58866"/>
        <dbReference type="ChEBI" id="CHEBI:59776"/>
        <dbReference type="EC" id="4.2.1.20"/>
    </reaction>
</comment>
<comment type="pathway">
    <text evidence="1">Amino-acid biosynthesis; L-tryptophan biosynthesis; L-tryptophan from chorismate: step 5/5.</text>
</comment>
<comment type="subunit">
    <text evidence="1">Tetramer of two alpha and two beta chains.</text>
</comment>
<comment type="similarity">
    <text evidence="1">Belongs to the TrpA family.</text>
</comment>
<protein>
    <recommendedName>
        <fullName evidence="1">Tryptophan synthase alpha chain</fullName>
        <ecNumber evidence="1">4.2.1.20</ecNumber>
    </recommendedName>
</protein>
<proteinExistence type="inferred from homology"/>
<sequence>MSRLQTRFAELKQADRAALVTFVTAGDPDYETSLAILKGLPEAGADVIELGMPFTDPMADGPAIQLANIRALGAGQNLVKTLRMVRAFREGDRTTPLVLMGYFNPIHYYGVERFIAEAREAGVDGLIVVDLPPEHNEDLCDPAQAAGLDFIRLTTPTTDDKRLPRVLAGSSGFVYYVSVAGVTGAHAASLEHVEQAVARLRRHTDLPLCIGFGIRSPEHAGSVARLAEGVVVGSALVDRIAKAGSKEQAVGDVLGLCRELAEGVRRARR</sequence>